<protein>
    <recommendedName>
        <fullName evidence="1">Sulfurtransferase TusD</fullName>
        <ecNumber evidence="1">2.8.1.-</ecNumber>
    </recommendedName>
    <alternativeName>
        <fullName evidence="1">tRNA 2-thiouridine synthesizing protein D</fullName>
    </alternativeName>
</protein>
<feature type="chain" id="PRO_0000214723" description="Sulfurtransferase TusD">
    <location>
        <begin position="1"/>
        <end position="130"/>
    </location>
</feature>
<feature type="active site" description="Cysteine persulfide intermediate" evidence="1">
    <location>
        <position position="78"/>
    </location>
</feature>
<evidence type="ECO:0000255" key="1">
    <source>
        <dbReference type="HAMAP-Rule" id="MF_00390"/>
    </source>
</evidence>
<organism>
    <name type="scientific">Buchnera aphidicola subsp. Baizongia pistaciae (strain Bp)</name>
    <dbReference type="NCBI Taxonomy" id="224915"/>
    <lineage>
        <taxon>Bacteria</taxon>
        <taxon>Pseudomonadati</taxon>
        <taxon>Pseudomonadota</taxon>
        <taxon>Gammaproteobacteria</taxon>
        <taxon>Enterobacterales</taxon>
        <taxon>Erwiniaceae</taxon>
        <taxon>Buchnera</taxon>
    </lineage>
</organism>
<name>TUSD_BUCBP</name>
<reference key="1">
    <citation type="journal article" date="2003" name="Proc. Natl. Acad. Sci. U.S.A.">
        <title>Reductive genome evolution in Buchnera aphidicola.</title>
        <authorList>
            <person name="van Ham R.C.H.J."/>
            <person name="Kamerbeek J."/>
            <person name="Palacios C."/>
            <person name="Rausell C."/>
            <person name="Abascal F."/>
            <person name="Bastolla U."/>
            <person name="Fernandez J.M."/>
            <person name="Jimenez L."/>
            <person name="Postigo M."/>
            <person name="Silva F.J."/>
            <person name="Tamames J."/>
            <person name="Viguera E."/>
            <person name="Latorre A."/>
            <person name="Valencia A."/>
            <person name="Moran F."/>
            <person name="Moya A."/>
        </authorList>
    </citation>
    <scope>NUCLEOTIDE SEQUENCE [LARGE SCALE GENOMIC DNA]</scope>
    <source>
        <strain>Bp</strain>
    </source>
</reference>
<proteinExistence type="inferred from homology"/>
<sequence length="130" mass="14759">MNYTVLVIGPPYSTQNSTSAFLFSRAVILNHHKLLSIFFYCDGALNANKFISPNFNECNLVEEWTWLHNKYLVKLCVCVSAALRRGVIDVVSNTKQNKNIKVGNLKSSFFLTGLGEFSNYLKISDRVIQF</sequence>
<dbReference type="EC" id="2.8.1.-" evidence="1"/>
<dbReference type="EMBL" id="AE016826">
    <property type="protein sequence ID" value="AAO27181.1"/>
    <property type="molecule type" value="Genomic_DNA"/>
</dbReference>
<dbReference type="RefSeq" id="WP_011091582.1">
    <property type="nucleotide sequence ID" value="NC_004545.1"/>
</dbReference>
<dbReference type="SMR" id="Q89A62"/>
<dbReference type="STRING" id="224915.bbp_475"/>
<dbReference type="KEGG" id="bab:bbp_475"/>
<dbReference type="eggNOG" id="COG1553">
    <property type="taxonomic scope" value="Bacteria"/>
</dbReference>
<dbReference type="HOGENOM" id="CLU_132095_0_0_6"/>
<dbReference type="OrthoDB" id="9787483at2"/>
<dbReference type="Proteomes" id="UP000000601">
    <property type="component" value="Chromosome"/>
</dbReference>
<dbReference type="GO" id="GO:1990228">
    <property type="term" value="C:sulfurtransferase complex"/>
    <property type="evidence" value="ECO:0007669"/>
    <property type="project" value="TreeGrafter"/>
</dbReference>
<dbReference type="GO" id="GO:0097163">
    <property type="term" value="F:sulfur carrier activity"/>
    <property type="evidence" value="ECO:0007669"/>
    <property type="project" value="TreeGrafter"/>
</dbReference>
<dbReference type="GO" id="GO:0016783">
    <property type="term" value="F:sulfurtransferase activity"/>
    <property type="evidence" value="ECO:0007669"/>
    <property type="project" value="UniProtKB-UniRule"/>
</dbReference>
<dbReference type="GO" id="GO:0002143">
    <property type="term" value="P:tRNA wobble position uridine thiolation"/>
    <property type="evidence" value="ECO:0007669"/>
    <property type="project" value="TreeGrafter"/>
</dbReference>
<dbReference type="Gene3D" id="3.40.1260.10">
    <property type="entry name" value="DsrEFH-like"/>
    <property type="match status" value="1"/>
</dbReference>
<dbReference type="HAMAP" id="MF_00390">
    <property type="entry name" value="Thiourid_synth_D"/>
    <property type="match status" value="1"/>
</dbReference>
<dbReference type="InterPro" id="IPR027396">
    <property type="entry name" value="DsrEFH-like"/>
</dbReference>
<dbReference type="InterPro" id="IPR003787">
    <property type="entry name" value="Sulphur_relay_DsrE/F-like"/>
</dbReference>
<dbReference type="InterPro" id="IPR017463">
    <property type="entry name" value="Sulphur_relay_TusD/DsrE"/>
</dbReference>
<dbReference type="NCBIfam" id="NF001237">
    <property type="entry name" value="PRK00207.1"/>
    <property type="match status" value="1"/>
</dbReference>
<dbReference type="NCBIfam" id="TIGR03012">
    <property type="entry name" value="sulf_tusD_dsrE"/>
    <property type="match status" value="1"/>
</dbReference>
<dbReference type="PANTHER" id="PTHR34874">
    <property type="entry name" value="PROTEIN YCHN"/>
    <property type="match status" value="1"/>
</dbReference>
<dbReference type="PANTHER" id="PTHR34874:SF3">
    <property type="entry name" value="SULFURTRANSFERASE TUSD"/>
    <property type="match status" value="1"/>
</dbReference>
<dbReference type="Pfam" id="PF02635">
    <property type="entry name" value="DsrE"/>
    <property type="match status" value="1"/>
</dbReference>
<dbReference type="SUPFAM" id="SSF75169">
    <property type="entry name" value="DsrEFH-like"/>
    <property type="match status" value="1"/>
</dbReference>
<keyword id="KW-0963">Cytoplasm</keyword>
<keyword id="KW-1185">Reference proteome</keyword>
<keyword id="KW-0808">Transferase</keyword>
<keyword id="KW-0819">tRNA processing</keyword>
<comment type="function">
    <text evidence="1">Part of a sulfur-relay system required for 2-thiolation of 5-methylaminomethyl-2-thiouridine (mnm(5)s(2)U) at tRNA wobble positions. Accepts sulfur from TusA and transfers it in turn to TusE.</text>
</comment>
<comment type="subunit">
    <text evidence="1">Heterohexamer, formed by a dimer of trimers. The hexameric TusBCD complex contains 2 copies each of TusB, TusC and TusD. The TusBCD complex interacts with TusE.</text>
</comment>
<comment type="subcellular location">
    <subcellularLocation>
        <location evidence="1">Cytoplasm</location>
    </subcellularLocation>
</comment>
<comment type="similarity">
    <text evidence="1">Belongs to the DsrE/TusD family.</text>
</comment>
<accession>Q89A62</accession>
<gene>
    <name evidence="1" type="primary">tusD</name>
    <name type="ordered locus">bbp_475</name>
</gene>